<accession>Q46WC7</accession>
<proteinExistence type="inferred from homology"/>
<dbReference type="EC" id="3.6.5.3" evidence="2"/>
<dbReference type="EMBL" id="CP000090">
    <property type="protein sequence ID" value="AAZ62542.1"/>
    <property type="molecule type" value="Genomic_DNA"/>
</dbReference>
<dbReference type="EMBL" id="CP000090">
    <property type="protein sequence ID" value="AAZ62556.1"/>
    <property type="molecule type" value="Genomic_DNA"/>
</dbReference>
<dbReference type="SMR" id="Q46WC7"/>
<dbReference type="STRING" id="264198.Reut_A3182"/>
<dbReference type="KEGG" id="reu:Reut_A3182"/>
<dbReference type="KEGG" id="reu:Reut_A3196"/>
<dbReference type="eggNOG" id="COG0050">
    <property type="taxonomic scope" value="Bacteria"/>
</dbReference>
<dbReference type="HOGENOM" id="CLU_007265_0_0_4"/>
<dbReference type="OrthoDB" id="9803139at2"/>
<dbReference type="GO" id="GO:0005737">
    <property type="term" value="C:cytoplasm"/>
    <property type="evidence" value="ECO:0007669"/>
    <property type="project" value="UniProtKB-SubCell"/>
</dbReference>
<dbReference type="GO" id="GO:0005525">
    <property type="term" value="F:GTP binding"/>
    <property type="evidence" value="ECO:0007669"/>
    <property type="project" value="UniProtKB-UniRule"/>
</dbReference>
<dbReference type="GO" id="GO:0003924">
    <property type="term" value="F:GTPase activity"/>
    <property type="evidence" value="ECO:0007669"/>
    <property type="project" value="InterPro"/>
</dbReference>
<dbReference type="GO" id="GO:0097216">
    <property type="term" value="F:guanosine tetraphosphate binding"/>
    <property type="evidence" value="ECO:0007669"/>
    <property type="project" value="UniProtKB-ARBA"/>
</dbReference>
<dbReference type="GO" id="GO:0003746">
    <property type="term" value="F:translation elongation factor activity"/>
    <property type="evidence" value="ECO:0007669"/>
    <property type="project" value="UniProtKB-UniRule"/>
</dbReference>
<dbReference type="CDD" id="cd01884">
    <property type="entry name" value="EF_Tu"/>
    <property type="match status" value="1"/>
</dbReference>
<dbReference type="CDD" id="cd03697">
    <property type="entry name" value="EFTU_II"/>
    <property type="match status" value="1"/>
</dbReference>
<dbReference type="CDD" id="cd03707">
    <property type="entry name" value="EFTU_III"/>
    <property type="match status" value="1"/>
</dbReference>
<dbReference type="FunFam" id="2.40.30.10:FF:000001">
    <property type="entry name" value="Elongation factor Tu"/>
    <property type="match status" value="1"/>
</dbReference>
<dbReference type="FunFam" id="3.40.50.300:FF:000003">
    <property type="entry name" value="Elongation factor Tu"/>
    <property type="match status" value="1"/>
</dbReference>
<dbReference type="Gene3D" id="3.40.50.300">
    <property type="entry name" value="P-loop containing nucleotide triphosphate hydrolases"/>
    <property type="match status" value="1"/>
</dbReference>
<dbReference type="Gene3D" id="2.40.30.10">
    <property type="entry name" value="Translation factors"/>
    <property type="match status" value="2"/>
</dbReference>
<dbReference type="HAMAP" id="MF_00118_B">
    <property type="entry name" value="EF_Tu_B"/>
    <property type="match status" value="1"/>
</dbReference>
<dbReference type="InterPro" id="IPR041709">
    <property type="entry name" value="EF-Tu_GTP-bd"/>
</dbReference>
<dbReference type="InterPro" id="IPR050055">
    <property type="entry name" value="EF-Tu_GTPase"/>
</dbReference>
<dbReference type="InterPro" id="IPR004161">
    <property type="entry name" value="EFTu-like_2"/>
</dbReference>
<dbReference type="InterPro" id="IPR033720">
    <property type="entry name" value="EFTU_2"/>
</dbReference>
<dbReference type="InterPro" id="IPR031157">
    <property type="entry name" value="G_TR_CS"/>
</dbReference>
<dbReference type="InterPro" id="IPR027417">
    <property type="entry name" value="P-loop_NTPase"/>
</dbReference>
<dbReference type="InterPro" id="IPR005225">
    <property type="entry name" value="Small_GTP-bd"/>
</dbReference>
<dbReference type="InterPro" id="IPR000795">
    <property type="entry name" value="T_Tr_GTP-bd_dom"/>
</dbReference>
<dbReference type="InterPro" id="IPR009000">
    <property type="entry name" value="Transl_B-barrel_sf"/>
</dbReference>
<dbReference type="InterPro" id="IPR009001">
    <property type="entry name" value="Transl_elong_EF1A/Init_IF2_C"/>
</dbReference>
<dbReference type="InterPro" id="IPR004541">
    <property type="entry name" value="Transl_elong_EFTu/EF1A_bac/org"/>
</dbReference>
<dbReference type="InterPro" id="IPR004160">
    <property type="entry name" value="Transl_elong_EFTu/EF1A_C"/>
</dbReference>
<dbReference type="NCBIfam" id="TIGR00485">
    <property type="entry name" value="EF-Tu"/>
    <property type="match status" value="1"/>
</dbReference>
<dbReference type="NCBIfam" id="NF000766">
    <property type="entry name" value="PRK00049.1"/>
    <property type="match status" value="1"/>
</dbReference>
<dbReference type="NCBIfam" id="NF009372">
    <property type="entry name" value="PRK12735.1"/>
    <property type="match status" value="1"/>
</dbReference>
<dbReference type="NCBIfam" id="NF009373">
    <property type="entry name" value="PRK12736.1"/>
    <property type="match status" value="1"/>
</dbReference>
<dbReference type="NCBIfam" id="TIGR00231">
    <property type="entry name" value="small_GTP"/>
    <property type="match status" value="1"/>
</dbReference>
<dbReference type="PANTHER" id="PTHR43721:SF22">
    <property type="entry name" value="ELONGATION FACTOR TU, MITOCHONDRIAL"/>
    <property type="match status" value="1"/>
</dbReference>
<dbReference type="PANTHER" id="PTHR43721">
    <property type="entry name" value="ELONGATION FACTOR TU-RELATED"/>
    <property type="match status" value="1"/>
</dbReference>
<dbReference type="Pfam" id="PF00009">
    <property type="entry name" value="GTP_EFTU"/>
    <property type="match status" value="1"/>
</dbReference>
<dbReference type="Pfam" id="PF03144">
    <property type="entry name" value="GTP_EFTU_D2"/>
    <property type="match status" value="1"/>
</dbReference>
<dbReference type="Pfam" id="PF03143">
    <property type="entry name" value="GTP_EFTU_D3"/>
    <property type="match status" value="1"/>
</dbReference>
<dbReference type="PRINTS" id="PR00315">
    <property type="entry name" value="ELONGATNFCT"/>
</dbReference>
<dbReference type="SUPFAM" id="SSF50465">
    <property type="entry name" value="EF-Tu/eEF-1alpha/eIF2-gamma C-terminal domain"/>
    <property type="match status" value="1"/>
</dbReference>
<dbReference type="SUPFAM" id="SSF52540">
    <property type="entry name" value="P-loop containing nucleoside triphosphate hydrolases"/>
    <property type="match status" value="1"/>
</dbReference>
<dbReference type="SUPFAM" id="SSF50447">
    <property type="entry name" value="Translation proteins"/>
    <property type="match status" value="1"/>
</dbReference>
<dbReference type="PROSITE" id="PS00301">
    <property type="entry name" value="G_TR_1"/>
    <property type="match status" value="1"/>
</dbReference>
<dbReference type="PROSITE" id="PS51722">
    <property type="entry name" value="G_TR_2"/>
    <property type="match status" value="1"/>
</dbReference>
<feature type="chain" id="PRO_0000337484" description="Elongation factor Tu">
    <location>
        <begin position="1"/>
        <end position="396"/>
    </location>
</feature>
<feature type="domain" description="tr-type G">
    <location>
        <begin position="10"/>
        <end position="206"/>
    </location>
</feature>
<feature type="region of interest" description="G1" evidence="1">
    <location>
        <begin position="19"/>
        <end position="26"/>
    </location>
</feature>
<feature type="region of interest" description="G2" evidence="1">
    <location>
        <begin position="60"/>
        <end position="64"/>
    </location>
</feature>
<feature type="region of interest" description="G3" evidence="1">
    <location>
        <begin position="81"/>
        <end position="84"/>
    </location>
</feature>
<feature type="region of interest" description="G4" evidence="1">
    <location>
        <begin position="136"/>
        <end position="139"/>
    </location>
</feature>
<feature type="region of interest" description="G5" evidence="1">
    <location>
        <begin position="174"/>
        <end position="176"/>
    </location>
</feature>
<feature type="binding site" evidence="2">
    <location>
        <begin position="19"/>
        <end position="26"/>
    </location>
    <ligand>
        <name>GTP</name>
        <dbReference type="ChEBI" id="CHEBI:37565"/>
    </ligand>
</feature>
<feature type="binding site" evidence="2">
    <location>
        <position position="26"/>
    </location>
    <ligand>
        <name>Mg(2+)</name>
        <dbReference type="ChEBI" id="CHEBI:18420"/>
    </ligand>
</feature>
<feature type="binding site" evidence="2">
    <location>
        <begin position="81"/>
        <end position="85"/>
    </location>
    <ligand>
        <name>GTP</name>
        <dbReference type="ChEBI" id="CHEBI:37565"/>
    </ligand>
</feature>
<feature type="binding site" evidence="2">
    <location>
        <begin position="136"/>
        <end position="139"/>
    </location>
    <ligand>
        <name>GTP</name>
        <dbReference type="ChEBI" id="CHEBI:37565"/>
    </ligand>
</feature>
<gene>
    <name evidence="2" type="primary">tuf1</name>
    <name type="ordered locus">Reut_A3182</name>
</gene>
<gene>
    <name evidence="2" type="primary">tuf2</name>
    <name type="ordered locus">Reut_A3196</name>
</gene>
<name>EFTU_CUPPJ</name>
<keyword id="KW-0963">Cytoplasm</keyword>
<keyword id="KW-0251">Elongation factor</keyword>
<keyword id="KW-0342">GTP-binding</keyword>
<keyword id="KW-0378">Hydrolase</keyword>
<keyword id="KW-0460">Magnesium</keyword>
<keyword id="KW-0479">Metal-binding</keyword>
<keyword id="KW-0547">Nucleotide-binding</keyword>
<keyword id="KW-0648">Protein biosynthesis</keyword>
<sequence>MAKEKFERTKPHVNVGTIGHVDHGKTTLTAAIATVLAAKFGGAAKKYDEIDAAPEEKARGITINTAHVEYETANRHYAHVDCPGHADYVKNMITGAAQMDGAILVCSAADGPMPQTREHILLARQVGVPYIIVFLNKCDMVDDAELLELVEMEVRELLSKYEFPGDDTPIIKGSAKLALEGDKGELGEVAIMNLADALDTYIPTPERAVDGTFLMPVEDVFSISGRGTVVTGRIERGVIKVGEEIEIVGIRPTVKTTCTGVEMFRKLLDQGQAGDNVGLLLRGTKREDVERGQVLCKPGSIKPHTHFTGEVYILSKDEGGRHTPFFNNYRPQFYFRTTDVTGSIELPADKEMVMPGDNVSITVKLIAPIAMEEGLRFAIREGGRTVGAGVVAKILD</sequence>
<reference key="1">
    <citation type="journal article" date="2010" name="PLoS ONE">
        <title>The complete multipartite genome sequence of Cupriavidus necator JMP134, a versatile pollutant degrader.</title>
        <authorList>
            <person name="Lykidis A."/>
            <person name="Perez-Pantoja D."/>
            <person name="Ledger T."/>
            <person name="Mavromatis K."/>
            <person name="Anderson I.J."/>
            <person name="Ivanova N.N."/>
            <person name="Hooper S.D."/>
            <person name="Lapidus A."/>
            <person name="Lucas S."/>
            <person name="Gonzalez B."/>
            <person name="Kyrpides N.C."/>
        </authorList>
    </citation>
    <scope>NUCLEOTIDE SEQUENCE [LARGE SCALE GENOMIC DNA]</scope>
    <source>
        <strain>JMP134 / LMG 1197</strain>
    </source>
</reference>
<organism>
    <name type="scientific">Cupriavidus pinatubonensis (strain JMP 134 / LMG 1197)</name>
    <name type="common">Cupriavidus necator (strain JMP 134)</name>
    <dbReference type="NCBI Taxonomy" id="264198"/>
    <lineage>
        <taxon>Bacteria</taxon>
        <taxon>Pseudomonadati</taxon>
        <taxon>Pseudomonadota</taxon>
        <taxon>Betaproteobacteria</taxon>
        <taxon>Burkholderiales</taxon>
        <taxon>Burkholderiaceae</taxon>
        <taxon>Cupriavidus</taxon>
    </lineage>
</organism>
<evidence type="ECO:0000250" key="1"/>
<evidence type="ECO:0000255" key="2">
    <source>
        <dbReference type="HAMAP-Rule" id="MF_00118"/>
    </source>
</evidence>
<comment type="function">
    <text evidence="2">GTP hydrolase that promotes the GTP-dependent binding of aminoacyl-tRNA to the A-site of ribosomes during protein biosynthesis.</text>
</comment>
<comment type="catalytic activity">
    <reaction evidence="2">
        <text>GTP + H2O = GDP + phosphate + H(+)</text>
        <dbReference type="Rhea" id="RHEA:19669"/>
        <dbReference type="ChEBI" id="CHEBI:15377"/>
        <dbReference type="ChEBI" id="CHEBI:15378"/>
        <dbReference type="ChEBI" id="CHEBI:37565"/>
        <dbReference type="ChEBI" id="CHEBI:43474"/>
        <dbReference type="ChEBI" id="CHEBI:58189"/>
        <dbReference type="EC" id="3.6.5.3"/>
    </reaction>
    <physiologicalReaction direction="left-to-right" evidence="2">
        <dbReference type="Rhea" id="RHEA:19670"/>
    </physiologicalReaction>
</comment>
<comment type="subunit">
    <text evidence="2">Monomer.</text>
</comment>
<comment type="subcellular location">
    <subcellularLocation>
        <location evidence="2">Cytoplasm</location>
    </subcellularLocation>
</comment>
<comment type="similarity">
    <text evidence="2">Belongs to the TRAFAC class translation factor GTPase superfamily. Classic translation factor GTPase family. EF-Tu/EF-1A subfamily.</text>
</comment>
<protein>
    <recommendedName>
        <fullName evidence="2">Elongation factor Tu</fullName>
        <shortName evidence="2">EF-Tu</shortName>
        <ecNumber evidence="2">3.6.5.3</ecNumber>
    </recommendedName>
</protein>